<gene>
    <name type="primary">mgrA</name>
    <name type="synonym">norR</name>
    <name type="ordered locus">SACOL0746</name>
</gene>
<protein>
    <recommendedName>
        <fullName>HTH-type transcriptional regulator MgrA</fullName>
    </recommendedName>
</protein>
<organism>
    <name type="scientific">Staphylococcus aureus (strain COL)</name>
    <dbReference type="NCBI Taxonomy" id="93062"/>
    <lineage>
        <taxon>Bacteria</taxon>
        <taxon>Bacillati</taxon>
        <taxon>Bacillota</taxon>
        <taxon>Bacilli</taxon>
        <taxon>Bacillales</taxon>
        <taxon>Staphylococcaceae</taxon>
        <taxon>Staphylococcus</taxon>
    </lineage>
</organism>
<accession>Q5HHY2</accession>
<name>MGRA_STAAC</name>
<comment type="function">
    <text evidence="1">Regulatory protein involved in autolytic activity, multidrug resistance and virulence.</text>
</comment>
<comment type="subcellular location">
    <subcellularLocation>
        <location evidence="3">Cytoplasm</location>
    </subcellularLocation>
</comment>
<dbReference type="EMBL" id="CP000046">
    <property type="protein sequence ID" value="AAW37807.1"/>
    <property type="molecule type" value="Genomic_DNA"/>
</dbReference>
<dbReference type="RefSeq" id="WP_001283444.1">
    <property type="nucleotide sequence ID" value="NZ_JBGOFO010000005.1"/>
</dbReference>
<dbReference type="SMR" id="Q5HHY2"/>
<dbReference type="GeneID" id="98345028"/>
<dbReference type="KEGG" id="sac:SACOL0746"/>
<dbReference type="HOGENOM" id="CLU_083287_3_2_9"/>
<dbReference type="Proteomes" id="UP000000530">
    <property type="component" value="Chromosome"/>
</dbReference>
<dbReference type="GO" id="GO:0005737">
    <property type="term" value="C:cytoplasm"/>
    <property type="evidence" value="ECO:0007669"/>
    <property type="project" value="UniProtKB-SubCell"/>
</dbReference>
<dbReference type="GO" id="GO:0003677">
    <property type="term" value="F:DNA binding"/>
    <property type="evidence" value="ECO:0007669"/>
    <property type="project" value="UniProtKB-KW"/>
</dbReference>
<dbReference type="GO" id="GO:0003700">
    <property type="term" value="F:DNA-binding transcription factor activity"/>
    <property type="evidence" value="ECO:0007669"/>
    <property type="project" value="InterPro"/>
</dbReference>
<dbReference type="GO" id="GO:0006950">
    <property type="term" value="P:response to stress"/>
    <property type="evidence" value="ECO:0007669"/>
    <property type="project" value="TreeGrafter"/>
</dbReference>
<dbReference type="FunFam" id="1.10.10.10:FF:000163">
    <property type="entry name" value="MarR family transcriptional regulator"/>
    <property type="match status" value="1"/>
</dbReference>
<dbReference type="Gene3D" id="1.10.10.10">
    <property type="entry name" value="Winged helix-like DNA-binding domain superfamily/Winged helix DNA-binding domain"/>
    <property type="match status" value="1"/>
</dbReference>
<dbReference type="InterPro" id="IPR000835">
    <property type="entry name" value="HTH_MarR-typ"/>
</dbReference>
<dbReference type="InterPro" id="IPR039422">
    <property type="entry name" value="MarR/SlyA-like"/>
</dbReference>
<dbReference type="InterPro" id="IPR055166">
    <property type="entry name" value="Transc_reg_Sar_Rot_HTH"/>
</dbReference>
<dbReference type="InterPro" id="IPR023187">
    <property type="entry name" value="Tscrpt_reg_MarR-type_CS"/>
</dbReference>
<dbReference type="InterPro" id="IPR036388">
    <property type="entry name" value="WH-like_DNA-bd_sf"/>
</dbReference>
<dbReference type="InterPro" id="IPR036390">
    <property type="entry name" value="WH_DNA-bd_sf"/>
</dbReference>
<dbReference type="PANTHER" id="PTHR33164:SF5">
    <property type="entry name" value="ORGANIC HYDROPEROXIDE RESISTANCE TRANSCRIPTIONAL REGULATOR"/>
    <property type="match status" value="1"/>
</dbReference>
<dbReference type="PANTHER" id="PTHR33164">
    <property type="entry name" value="TRANSCRIPTIONAL REGULATOR, MARR FAMILY"/>
    <property type="match status" value="1"/>
</dbReference>
<dbReference type="Pfam" id="PF22381">
    <property type="entry name" value="Staph_reg_Sar_Rot"/>
    <property type="match status" value="1"/>
</dbReference>
<dbReference type="SMART" id="SM00347">
    <property type="entry name" value="HTH_MARR"/>
    <property type="match status" value="1"/>
</dbReference>
<dbReference type="SUPFAM" id="SSF46785">
    <property type="entry name" value="Winged helix' DNA-binding domain"/>
    <property type="match status" value="1"/>
</dbReference>
<dbReference type="PROSITE" id="PS01117">
    <property type="entry name" value="HTH_MARR_1"/>
    <property type="match status" value="1"/>
</dbReference>
<dbReference type="PROSITE" id="PS50995">
    <property type="entry name" value="HTH_MARR_2"/>
    <property type="match status" value="1"/>
</dbReference>
<feature type="initiator methionine" description="Removed" evidence="1">
    <location>
        <position position="1"/>
    </location>
</feature>
<feature type="chain" id="PRO_0000054367" description="HTH-type transcriptional regulator MgrA">
    <location>
        <begin position="2"/>
        <end position="147"/>
    </location>
</feature>
<feature type="domain" description="HTH marR-type" evidence="2">
    <location>
        <begin position="8"/>
        <end position="139"/>
    </location>
</feature>
<feature type="DNA-binding region" description="H-T-H motif" evidence="2">
    <location>
        <begin position="55"/>
        <end position="78"/>
    </location>
</feature>
<reference key="1">
    <citation type="journal article" date="2005" name="J. Bacteriol.">
        <title>Insights on evolution of virulence and resistance from the complete genome analysis of an early methicillin-resistant Staphylococcus aureus strain and a biofilm-producing methicillin-resistant Staphylococcus epidermidis strain.</title>
        <authorList>
            <person name="Gill S.R."/>
            <person name="Fouts D.E."/>
            <person name="Archer G.L."/>
            <person name="Mongodin E.F."/>
            <person name="DeBoy R.T."/>
            <person name="Ravel J."/>
            <person name="Paulsen I.T."/>
            <person name="Kolonay J.F."/>
            <person name="Brinkac L.M."/>
            <person name="Beanan M.J."/>
            <person name="Dodson R.J."/>
            <person name="Daugherty S.C."/>
            <person name="Madupu R."/>
            <person name="Angiuoli S.V."/>
            <person name="Durkin A.S."/>
            <person name="Haft D.H."/>
            <person name="Vamathevan J.J."/>
            <person name="Khouri H."/>
            <person name="Utterback T.R."/>
            <person name="Lee C."/>
            <person name="Dimitrov G."/>
            <person name="Jiang L."/>
            <person name="Qin H."/>
            <person name="Weidman J."/>
            <person name="Tran K."/>
            <person name="Kang K.H."/>
            <person name="Hance I.R."/>
            <person name="Nelson K.E."/>
            <person name="Fraser C.M."/>
        </authorList>
    </citation>
    <scope>NUCLEOTIDE SEQUENCE [LARGE SCALE GENOMIC DNA]</scope>
    <source>
        <strain>COL</strain>
    </source>
</reference>
<evidence type="ECO:0000250" key="1"/>
<evidence type="ECO:0000255" key="2">
    <source>
        <dbReference type="PROSITE-ProRule" id="PRU00345"/>
    </source>
</evidence>
<evidence type="ECO:0000305" key="3"/>
<proteinExistence type="inferred from homology"/>
<sequence>MSDQHNLKEQLCFSLYNAQRQVNRYYSNKVFKKYNLTYPQFLVLTILWDESPVNVKKVVTELALDTGTVSPLLKRMEQVDLIKRERSEVDQREVFIHLTDKSETIRPELSNASDKVASASSLSQDEVKELNRLLGKVIHAFDETKEK</sequence>
<keyword id="KW-0010">Activator</keyword>
<keyword id="KW-0963">Cytoplasm</keyword>
<keyword id="KW-0238">DNA-binding</keyword>
<keyword id="KW-0678">Repressor</keyword>
<keyword id="KW-0804">Transcription</keyword>
<keyword id="KW-0805">Transcription regulation</keyword>
<keyword id="KW-0843">Virulence</keyword>